<comment type="function">
    <text evidence="1">May act by engaging a cell surface molecule on immature T-cells in the embryonic thymus.</text>
</comment>
<comment type="subcellular location">
    <subcellularLocation>
        <location evidence="6">Membrane</location>
        <topology evidence="6">Multi-pass membrane protein</topology>
    </subcellularLocation>
</comment>
<comment type="alternative products">
    <event type="alternative splicing"/>
    <isoform>
        <id>A7XUZ6-1</id>
        <name>1</name>
        <name>A</name>
        <sequence type="displayed"/>
    </isoform>
    <isoform>
        <id>A7XUZ6-2</id>
        <name>2</name>
        <name>B</name>
        <sequence type="described" ref="VSP_034886 VSP_034887"/>
    </isoform>
</comment>
<comment type="tissue specificity">
    <text evidence="4">Expressed in skin.</text>
</comment>
<comment type="miscellaneous">
    <text>Encoded by one of the 11 copies of Skint genes clustered in the D1 region of the chromosome 4.</text>
</comment>
<comment type="similarity">
    <text evidence="6">Belongs to the SKINT family.</text>
</comment>
<name>SKIT6_MOUSE</name>
<dbReference type="EMBL" id="EU099304">
    <property type="protein sequence ID" value="ABU87902.1"/>
    <property type="molecule type" value="mRNA"/>
</dbReference>
<dbReference type="EMBL" id="EU099305">
    <property type="protein sequence ID" value="ABU87903.1"/>
    <property type="molecule type" value="mRNA"/>
</dbReference>
<dbReference type="CCDS" id="CCDS51269.1">
    <molecule id="A7XUZ6-1"/>
</dbReference>
<dbReference type="RefSeq" id="NP_001096669.1">
    <molecule id="A7XUZ6-1"/>
    <property type="nucleotide sequence ID" value="NM_001103199.1"/>
</dbReference>
<dbReference type="SMR" id="A7XUZ6"/>
<dbReference type="BioGRID" id="230987">
    <property type="interactions" value="1"/>
</dbReference>
<dbReference type="FunCoup" id="A7XUZ6">
    <property type="interactions" value="242"/>
</dbReference>
<dbReference type="GlyCosmos" id="A7XUZ6">
    <property type="glycosylation" value="3 sites, No reported glycans"/>
</dbReference>
<dbReference type="GlyGen" id="A7XUZ6">
    <property type="glycosylation" value="3 sites"/>
</dbReference>
<dbReference type="iPTMnet" id="A7XUZ6"/>
<dbReference type="PhosphoSitePlus" id="A7XUZ6"/>
<dbReference type="PaxDb" id="10090-ENSMUSP00000121870"/>
<dbReference type="Ensembl" id="ENSMUST00000138966.9">
    <molecule id="A7XUZ6-1"/>
    <property type="protein sequence ID" value="ENSMUSP00000121870.3"/>
    <property type="gene ID" value="ENSMUSG00000087194.10"/>
</dbReference>
<dbReference type="Ensembl" id="ENSMUST00000171224.2">
    <molecule id="A7XUZ6-1"/>
    <property type="protein sequence ID" value="ENSMUSP00000132312.2"/>
    <property type="gene ID" value="ENSMUSG00000087194.10"/>
</dbReference>
<dbReference type="GeneID" id="230622"/>
<dbReference type="KEGG" id="mmu:230622"/>
<dbReference type="UCSC" id="uc009vcx.1">
    <molecule id="A7XUZ6-1"/>
    <property type="organism name" value="mouse"/>
</dbReference>
<dbReference type="AGR" id="MGI:3649262"/>
<dbReference type="CTD" id="230622"/>
<dbReference type="MGI" id="MGI:3649262">
    <property type="gene designation" value="Skint6"/>
</dbReference>
<dbReference type="VEuPathDB" id="HostDB:ENSMUSG00000087194"/>
<dbReference type="eggNOG" id="ENOG502SEQH">
    <property type="taxonomic scope" value="Eukaryota"/>
</dbReference>
<dbReference type="GeneTree" id="ENSGT00940000162562"/>
<dbReference type="HOGENOM" id="CLU_004477_0_0_1"/>
<dbReference type="InParanoid" id="A7XUZ6"/>
<dbReference type="OMA" id="TFWYSSL"/>
<dbReference type="OrthoDB" id="9986391at2759"/>
<dbReference type="PhylomeDB" id="A7XUZ6"/>
<dbReference type="TreeFam" id="TF331083"/>
<dbReference type="BioGRID-ORCS" id="230622">
    <property type="hits" value="1 hit in 76 CRISPR screens"/>
</dbReference>
<dbReference type="ChiTaRS" id="Skint6">
    <property type="organism name" value="mouse"/>
</dbReference>
<dbReference type="PRO" id="PR:A7XUZ6"/>
<dbReference type="Proteomes" id="UP000000589">
    <property type="component" value="Chromosome 4"/>
</dbReference>
<dbReference type="RNAct" id="A7XUZ6">
    <property type="molecule type" value="protein"/>
</dbReference>
<dbReference type="Bgee" id="ENSMUSG00000087194">
    <property type="expression patterns" value="Expressed in zone of skin and 4 other cell types or tissues"/>
</dbReference>
<dbReference type="GO" id="GO:0016020">
    <property type="term" value="C:membrane"/>
    <property type="evidence" value="ECO:0007669"/>
    <property type="project" value="UniProtKB-SubCell"/>
</dbReference>
<dbReference type="FunFam" id="2.60.40.10:FF:000088">
    <property type="entry name" value="Butyrophilin subfamily 1 member A1"/>
    <property type="match status" value="1"/>
</dbReference>
<dbReference type="FunFam" id="2.60.40.10:FF:000142">
    <property type="entry name" value="V-set domain-containing T-cell activation inhibitor 1"/>
    <property type="match status" value="1"/>
</dbReference>
<dbReference type="Gene3D" id="2.60.40.10">
    <property type="entry name" value="Immunoglobulins"/>
    <property type="match status" value="2"/>
</dbReference>
<dbReference type="InterPro" id="IPR016024">
    <property type="entry name" value="ARM-type_fold"/>
</dbReference>
<dbReference type="InterPro" id="IPR053896">
    <property type="entry name" value="BTN3A2-like_Ig-C"/>
</dbReference>
<dbReference type="InterPro" id="IPR007110">
    <property type="entry name" value="Ig-like_dom"/>
</dbReference>
<dbReference type="InterPro" id="IPR036179">
    <property type="entry name" value="Ig-like_dom_sf"/>
</dbReference>
<dbReference type="InterPro" id="IPR013783">
    <property type="entry name" value="Ig-like_fold"/>
</dbReference>
<dbReference type="InterPro" id="IPR003599">
    <property type="entry name" value="Ig_sub"/>
</dbReference>
<dbReference type="InterPro" id="IPR013106">
    <property type="entry name" value="Ig_V-set"/>
</dbReference>
<dbReference type="InterPro" id="IPR050504">
    <property type="entry name" value="IgSF_BTN/MOG"/>
</dbReference>
<dbReference type="PANTHER" id="PTHR24100">
    <property type="entry name" value="BUTYROPHILIN"/>
    <property type="match status" value="1"/>
</dbReference>
<dbReference type="PANTHER" id="PTHR24100:SF152">
    <property type="entry name" value="SELECTION AND UPKEEP OF INTRAEPITHELIAL T-CELLS PROTEIN 5-RELATED"/>
    <property type="match status" value="1"/>
</dbReference>
<dbReference type="Pfam" id="PF22705">
    <property type="entry name" value="C2-set_3"/>
    <property type="match status" value="1"/>
</dbReference>
<dbReference type="Pfam" id="PF07686">
    <property type="entry name" value="V-set"/>
    <property type="match status" value="1"/>
</dbReference>
<dbReference type="SMART" id="SM00409">
    <property type="entry name" value="IG"/>
    <property type="match status" value="1"/>
</dbReference>
<dbReference type="SMART" id="SM00406">
    <property type="entry name" value="IGv"/>
    <property type="match status" value="1"/>
</dbReference>
<dbReference type="SUPFAM" id="SSF48371">
    <property type="entry name" value="ARM repeat"/>
    <property type="match status" value="1"/>
</dbReference>
<dbReference type="SUPFAM" id="SSF48726">
    <property type="entry name" value="Immunoglobulin"/>
    <property type="match status" value="2"/>
</dbReference>
<dbReference type="PROSITE" id="PS50835">
    <property type="entry name" value="IG_LIKE"/>
    <property type="match status" value="1"/>
</dbReference>
<evidence type="ECO:0000250" key="1"/>
<evidence type="ECO:0000255" key="2"/>
<evidence type="ECO:0000255" key="3">
    <source>
        <dbReference type="PROSITE-ProRule" id="PRU00114"/>
    </source>
</evidence>
<evidence type="ECO:0000269" key="4">
    <source>
    </source>
</evidence>
<evidence type="ECO:0000303" key="5">
    <source>
    </source>
</evidence>
<evidence type="ECO:0000305" key="6"/>
<protein>
    <recommendedName>
        <fullName>Selection and upkeep of intraepithelial T-cells protein 6</fullName>
        <shortName>Skint-6</shortName>
    </recommendedName>
</protein>
<proteinExistence type="evidence at transcript level"/>
<sequence length="1240" mass="141567">MGTIGVPLTAHCVVLFLLQMVALSTEQFTVNGLESPVLVPLGGNLELSCQLSPPQQAKHMEIRWFKNRYSEPVYLYRNGKDLNEAIVYKYVERTELLKDDIGKGKVTLRIFKVTSVDSGSYHCFFKDDKFYEEHIIEVKVTATSSDIQILMHPPNSTGVRLECHSGGWFPQPHMEWRDSKGEYIPATSKSHSQDENEFFNMTMDLFIKSNSYWSAACYIQNFVTHQEESISFVLPGTKVLLLKNIQSIFQSSSVDLEKKDMLLKSIKSRFQSSSVDPEKKERLLKIIQSRIESSSVDQETKALLLESIQSSIENSTVDLETKVWLLESIKSSIQNSSVDPETKELLLERIKSSIENSTVDLGTKEWLLESIQSSIQSSSVDLGTKKMLLKIIQSSIQSFSVYIGTKEWLLERVQSSIQSSSVDLGTKELLLEIIQSSIEGYSVELGIEELLSKIILSSIQSSRVDLGIKELLVKICQSSIQSTSVILETKEWLVKIFQSNIQSSSMDLETKVWLVKFFQSSIQSSSMDLGTIKWLVKNVQSNIQSSRVDLETKRMLLEIIQSSIQNSSVHRGTKKMLLKVIQSSIQSFSVDLETKEWLLKIIQSSIQSSSVDIGTKSMLLKKIGLILRSSIVNPGTELLFQIIQSDLQSSSVNTETREMLFEITQPTVQSSSVNSVTEELLEENYQLLLQSSSVNLEAENILNDTTQRILQLSSVNQGREKLLLDRIQQILQSSSVNPETKCWLLKRIQFILENPSVHQEKKDLLLERIHLILQSSSVQKETKSLLLGSIQSILHSFSVQKETKYLLLEKIQLILQNSSVHQETKDLLLKIIQLILQYSSVHEATSKLLLERIQLILQSSSVQKETKDLLLNRIFSILQNSCVDQGVKYFLLNIIHPILQKTSVHQETKSMLLDRIELILQSSSMQQETKNHLLDQIEQILQDTTVHQETKDLLLNRIELILQNSSVQQETKELLMDKIDSILRYTWVHQETKDLLLNRIELILQSSSVQEETKNFLCNIIASILQSTSMHQEKKKLLLGRIELILQSSSVQQETKKLLLKIVQSSSPSSSVRLESCNKRNPFWKKHALDLGISVFAIIVVTLIRHLNQREADQHFELDTLWSKDTSVILCVLIMFNNRLKALIYFRLYGYSPPGKTYKYIVNYILRFSQPLFFIVYSAIILVMHLQIQNTDSLFSLYNSWMVEMIMVLGLLLAIFNVKNIATALLHLGRTTLRLFRIKD</sequence>
<reference key="1">
    <citation type="journal article" date="2008" name="Nat. Genet.">
        <title>Skint1, the prototype of a newly identified immunoglobulin superfamily gene cluster, positively selects epidermal gammadelta T cells.</title>
        <authorList>
            <person name="Boyden L.M."/>
            <person name="Lewis J.M."/>
            <person name="Barbee S.D."/>
            <person name="Bas A."/>
            <person name="Girardi M."/>
            <person name="Hayday A.C."/>
            <person name="Tigelaar R.E."/>
            <person name="Lifton R.P."/>
        </authorList>
    </citation>
    <scope>NUCLEOTIDE SEQUENCE [MRNA] (ISOFORMS 1 AND 2)</scope>
    <scope>TISSUE SPECIFICITY</scope>
    <source>
        <strain>C57BL/6J</strain>
    </source>
</reference>
<accession>A7XUZ6</accession>
<accession>A7XV01</accession>
<keyword id="KW-0025">Alternative splicing</keyword>
<keyword id="KW-1015">Disulfide bond</keyword>
<keyword id="KW-0325">Glycoprotein</keyword>
<keyword id="KW-0393">Immunoglobulin domain</keyword>
<keyword id="KW-0472">Membrane</keyword>
<keyword id="KW-1185">Reference proteome</keyword>
<keyword id="KW-0677">Repeat</keyword>
<keyword id="KW-0732">Signal</keyword>
<keyword id="KW-0812">Transmembrane</keyword>
<keyword id="KW-1133">Transmembrane helix</keyword>
<gene>
    <name type="primary">Skint6</name>
</gene>
<feature type="signal peptide" evidence="2">
    <location>
        <begin position="1"/>
        <end position="24"/>
    </location>
</feature>
<feature type="chain" id="PRO_5000271640" description="Selection and upkeep of intraepithelial T-cells protein 6">
    <location>
        <begin position="25"/>
        <end position="1240"/>
    </location>
</feature>
<feature type="topological domain" description="Extracellular" evidence="2">
    <location>
        <begin position="25"/>
        <end position="1086"/>
    </location>
</feature>
<feature type="transmembrane region" description="Helical" evidence="2">
    <location>
        <begin position="1087"/>
        <end position="1107"/>
    </location>
</feature>
<feature type="topological domain" description="Cytoplasmic" evidence="2">
    <location>
        <begin position="1108"/>
        <end position="1125"/>
    </location>
</feature>
<feature type="transmembrane region" description="Helical" evidence="2">
    <location>
        <begin position="1126"/>
        <end position="1146"/>
    </location>
</feature>
<feature type="topological domain" description="Extracellular" evidence="2">
    <location>
        <begin position="1147"/>
        <end position="1167"/>
    </location>
</feature>
<feature type="transmembrane region" description="Helical" evidence="2">
    <location>
        <begin position="1168"/>
        <end position="1188"/>
    </location>
</feature>
<feature type="topological domain" description="Cytoplasmic" evidence="2">
    <location>
        <begin position="1189"/>
        <end position="1205"/>
    </location>
</feature>
<feature type="transmembrane region" description="Helical" evidence="2">
    <location>
        <begin position="1206"/>
        <end position="1226"/>
    </location>
</feature>
<feature type="topological domain" description="Extracellular" evidence="2">
    <location>
        <begin position="1227"/>
        <end position="1240"/>
    </location>
</feature>
<feature type="domain" description="Ig-like V-type">
    <location>
        <begin position="26"/>
        <end position="141"/>
    </location>
</feature>
<feature type="domain" description="Ig-like C1-type">
    <location>
        <begin position="142"/>
        <end position="231"/>
    </location>
</feature>
<feature type="glycosylation site" description="N-linked (GlcNAc...) asparagine" evidence="2">
    <location>
        <position position="155"/>
    </location>
</feature>
<feature type="glycosylation site" description="N-linked (GlcNAc...) asparagine" evidence="2">
    <location>
        <position position="200"/>
    </location>
</feature>
<feature type="glycosylation site" description="N-linked (GlcNAc...) asparagine" evidence="2">
    <location>
        <position position="314"/>
    </location>
</feature>
<feature type="disulfide bond" evidence="3">
    <location>
        <begin position="49"/>
        <end position="123"/>
    </location>
</feature>
<feature type="disulfide bond" evidence="3">
    <location>
        <begin position="163"/>
        <end position="217"/>
    </location>
</feature>
<feature type="splice variant" id="VSP_034886" description="In isoform 2." evidence="5">
    <original>YSPPGKTYKYIVNYILRFSQPLFFIV</original>
    <variation>KYDGNCVYSENMLHLTKAQMYRRLFL</variation>
    <location>
        <begin position="1151"/>
        <end position="1176"/>
    </location>
</feature>
<feature type="splice variant" id="VSP_034887" description="In isoform 2." evidence="5">
    <location>
        <begin position="1177"/>
        <end position="1240"/>
    </location>
</feature>
<organism>
    <name type="scientific">Mus musculus</name>
    <name type="common">Mouse</name>
    <dbReference type="NCBI Taxonomy" id="10090"/>
    <lineage>
        <taxon>Eukaryota</taxon>
        <taxon>Metazoa</taxon>
        <taxon>Chordata</taxon>
        <taxon>Craniata</taxon>
        <taxon>Vertebrata</taxon>
        <taxon>Euteleostomi</taxon>
        <taxon>Mammalia</taxon>
        <taxon>Eutheria</taxon>
        <taxon>Euarchontoglires</taxon>
        <taxon>Glires</taxon>
        <taxon>Rodentia</taxon>
        <taxon>Myomorpha</taxon>
        <taxon>Muroidea</taxon>
        <taxon>Muridae</taxon>
        <taxon>Murinae</taxon>
        <taxon>Mus</taxon>
        <taxon>Mus</taxon>
    </lineage>
</organism>